<evidence type="ECO:0000250" key="1">
    <source>
        <dbReference type="UniProtKB" id="Q8K4P8"/>
    </source>
</evidence>
<evidence type="ECO:0000255" key="2"/>
<evidence type="ECO:0000255" key="3">
    <source>
        <dbReference type="PROSITE-ProRule" id="PRU00041"/>
    </source>
</evidence>
<evidence type="ECO:0000255" key="4">
    <source>
        <dbReference type="PROSITE-ProRule" id="PRU00104"/>
    </source>
</evidence>
<evidence type="ECO:0000255" key="5">
    <source>
        <dbReference type="PROSITE-ProRule" id="PRU00224"/>
    </source>
</evidence>
<evidence type="ECO:0000256" key="6">
    <source>
        <dbReference type="SAM" id="MobiDB-lite"/>
    </source>
</evidence>
<evidence type="ECO:0000269" key="7">
    <source>
    </source>
</evidence>
<evidence type="ECO:0000303" key="8">
    <source>
    </source>
</evidence>
<evidence type="ECO:0000305" key="9"/>
<evidence type="ECO:0007829" key="10">
    <source>
        <dbReference type="PDB" id="3L4H"/>
    </source>
</evidence>
<protein>
    <recommendedName>
        <fullName>E3 ubiquitin-protein ligase HECW1</fullName>
        <ecNumber>2.3.2.26</ecNumber>
    </recommendedName>
    <alternativeName>
        <fullName>HECT, C2 and WW domain-containing protein 1</fullName>
    </alternativeName>
    <alternativeName>
        <fullName>HECT-type E3 ubiquitin transferase HECW1</fullName>
    </alternativeName>
    <alternativeName>
        <fullName>NEDD4-like E3 ubiquitin-protein ligase 1</fullName>
        <shortName>hNEDL1</shortName>
    </alternativeName>
</protein>
<comment type="function">
    <text evidence="7">E3 ubiquitin-protein ligase that mediates ubiquitination and subsequent degradation of DVL1. Also targets the mutant SOD1 protein involved in familial amyotrophic lateral sclerosis (FALS). Forms cytotoxic aggregates with DVL1, SSR3 and mutant SOD1 that lead to motor neuron death in FALS.</text>
</comment>
<comment type="catalytic activity">
    <reaction>
        <text>S-ubiquitinyl-[E2 ubiquitin-conjugating enzyme]-L-cysteine + [acceptor protein]-L-lysine = [E2 ubiquitin-conjugating enzyme]-L-cysteine + N(6)-ubiquitinyl-[acceptor protein]-L-lysine.</text>
        <dbReference type="EC" id="2.3.2.26"/>
    </reaction>
</comment>
<comment type="pathway">
    <text>Protein modification; protein ubiquitination.</text>
</comment>
<comment type="subunit">
    <text evidence="7">Interacts with DVL1 and SSR3. Also interacts with mutant SOD1.</text>
</comment>
<comment type="interaction">
    <interactant intactId="EBI-949582">
        <id>Q76N89</id>
    </interactant>
    <interactant intactId="EBI-12227803">
        <id>Q5SQQ9-2</id>
        <label>VAX1</label>
    </interactant>
    <organismsDiffer>false</organismsDiffer>
    <experiments>3</experiments>
</comment>
<comment type="subcellular location">
    <subcellularLocation>
        <location evidence="7">Cytoplasm</location>
    </subcellularLocation>
</comment>
<comment type="alternative products">
    <event type="alternative splicing"/>
    <isoform>
        <id>Q76N89-1</id>
        <name>1</name>
        <sequence type="displayed"/>
    </isoform>
    <isoform>
        <id>Q76N89-2</id>
        <name>2</name>
        <sequence type="described" ref="VSP_054642"/>
    </isoform>
</comment>
<comment type="tissue specificity">
    <text evidence="7">Predominantly expressed in neurons of adult and fetal brain. Weakly expressed in the kidney.</text>
</comment>
<comment type="sequence caution" evidence="9">
    <conflict type="erroneous initiation">
        <sequence resource="EMBL-CDS" id="BAA20780"/>
    </conflict>
</comment>
<accession>Q76N89</accession>
<accession>A7E2X0</accession>
<accession>A8MYS3</accession>
<accession>B4DH42</accession>
<accession>O15036</accession>
<accession>Q9HCC7</accession>
<proteinExistence type="evidence at protein level"/>
<reference key="1">
    <citation type="journal article" date="1997" name="DNA Res.">
        <title>Prediction of the coding sequences of unidentified human genes. VII. The complete sequences of 100 new cDNA clones from brain which can code for large proteins in vitro.</title>
        <authorList>
            <person name="Nagase T."/>
            <person name="Ishikawa K."/>
            <person name="Nakajima D."/>
            <person name="Ohira M."/>
            <person name="Seki N."/>
            <person name="Miyajima N."/>
            <person name="Tanaka A."/>
            <person name="Kotani H."/>
            <person name="Nomura N."/>
            <person name="Ohara O."/>
        </authorList>
    </citation>
    <scope>NUCLEOTIDE SEQUENCE [LARGE SCALE MRNA] (ISOFORM 1)</scope>
    <source>
        <tissue>Brain</tissue>
    </source>
</reference>
<reference key="2">
    <citation type="journal article" date="2002" name="DNA Res.">
        <title>Construction of expression-ready cDNA clones for KIAA genes: manual curation of 330 KIAA cDNA clones.</title>
        <authorList>
            <person name="Nakajima D."/>
            <person name="Okazaki N."/>
            <person name="Yamakawa H."/>
            <person name="Kikuno R."/>
            <person name="Ohara O."/>
            <person name="Nagase T."/>
        </authorList>
    </citation>
    <scope>SEQUENCE REVISION</scope>
</reference>
<reference key="3">
    <citation type="journal article" date="2004" name="Nat. Genet.">
        <title>Complete sequencing and characterization of 21,243 full-length human cDNAs.</title>
        <authorList>
            <person name="Ota T."/>
            <person name="Suzuki Y."/>
            <person name="Nishikawa T."/>
            <person name="Otsuki T."/>
            <person name="Sugiyama T."/>
            <person name="Irie R."/>
            <person name="Wakamatsu A."/>
            <person name="Hayashi K."/>
            <person name="Sato H."/>
            <person name="Nagai K."/>
            <person name="Kimura K."/>
            <person name="Makita H."/>
            <person name="Sekine M."/>
            <person name="Obayashi M."/>
            <person name="Nishi T."/>
            <person name="Shibahara T."/>
            <person name="Tanaka T."/>
            <person name="Ishii S."/>
            <person name="Yamamoto J."/>
            <person name="Saito K."/>
            <person name="Kawai Y."/>
            <person name="Isono Y."/>
            <person name="Nakamura Y."/>
            <person name="Nagahari K."/>
            <person name="Murakami K."/>
            <person name="Yasuda T."/>
            <person name="Iwayanagi T."/>
            <person name="Wagatsuma M."/>
            <person name="Shiratori A."/>
            <person name="Sudo H."/>
            <person name="Hosoiri T."/>
            <person name="Kaku Y."/>
            <person name="Kodaira H."/>
            <person name="Kondo H."/>
            <person name="Sugawara M."/>
            <person name="Takahashi M."/>
            <person name="Kanda K."/>
            <person name="Yokoi T."/>
            <person name="Furuya T."/>
            <person name="Kikkawa E."/>
            <person name="Omura Y."/>
            <person name="Abe K."/>
            <person name="Kamihara K."/>
            <person name="Katsuta N."/>
            <person name="Sato K."/>
            <person name="Tanikawa M."/>
            <person name="Yamazaki M."/>
            <person name="Ninomiya K."/>
            <person name="Ishibashi T."/>
            <person name="Yamashita H."/>
            <person name="Murakawa K."/>
            <person name="Fujimori K."/>
            <person name="Tanai H."/>
            <person name="Kimata M."/>
            <person name="Watanabe M."/>
            <person name="Hiraoka S."/>
            <person name="Chiba Y."/>
            <person name="Ishida S."/>
            <person name="Ono Y."/>
            <person name="Takiguchi S."/>
            <person name="Watanabe S."/>
            <person name="Yosida M."/>
            <person name="Hotuta T."/>
            <person name="Kusano J."/>
            <person name="Kanehori K."/>
            <person name="Takahashi-Fujii A."/>
            <person name="Hara H."/>
            <person name="Tanase T.-O."/>
            <person name="Nomura Y."/>
            <person name="Togiya S."/>
            <person name="Komai F."/>
            <person name="Hara R."/>
            <person name="Takeuchi K."/>
            <person name="Arita M."/>
            <person name="Imose N."/>
            <person name="Musashino K."/>
            <person name="Yuuki H."/>
            <person name="Oshima A."/>
            <person name="Sasaki N."/>
            <person name="Aotsuka S."/>
            <person name="Yoshikawa Y."/>
            <person name="Matsunawa H."/>
            <person name="Ichihara T."/>
            <person name="Shiohata N."/>
            <person name="Sano S."/>
            <person name="Moriya S."/>
            <person name="Momiyama H."/>
            <person name="Satoh N."/>
            <person name="Takami S."/>
            <person name="Terashima Y."/>
            <person name="Suzuki O."/>
            <person name="Nakagawa S."/>
            <person name="Senoh A."/>
            <person name="Mizoguchi H."/>
            <person name="Goto Y."/>
            <person name="Shimizu F."/>
            <person name="Wakebe H."/>
            <person name="Hishigaki H."/>
            <person name="Watanabe T."/>
            <person name="Sugiyama A."/>
            <person name="Takemoto M."/>
            <person name="Kawakami B."/>
            <person name="Yamazaki M."/>
            <person name="Watanabe K."/>
            <person name="Kumagai A."/>
            <person name="Itakura S."/>
            <person name="Fukuzumi Y."/>
            <person name="Fujimori Y."/>
            <person name="Komiyama M."/>
            <person name="Tashiro H."/>
            <person name="Tanigami A."/>
            <person name="Fujiwara T."/>
            <person name="Ono T."/>
            <person name="Yamada K."/>
            <person name="Fujii Y."/>
            <person name="Ozaki K."/>
            <person name="Hirao M."/>
            <person name="Ohmori Y."/>
            <person name="Kawabata A."/>
            <person name="Hikiji T."/>
            <person name="Kobatake N."/>
            <person name="Inagaki H."/>
            <person name="Ikema Y."/>
            <person name="Okamoto S."/>
            <person name="Okitani R."/>
            <person name="Kawakami T."/>
            <person name="Noguchi S."/>
            <person name="Itoh T."/>
            <person name="Shigeta K."/>
            <person name="Senba T."/>
            <person name="Matsumura K."/>
            <person name="Nakajima Y."/>
            <person name="Mizuno T."/>
            <person name="Morinaga M."/>
            <person name="Sasaki M."/>
            <person name="Togashi T."/>
            <person name="Oyama M."/>
            <person name="Hata H."/>
            <person name="Watanabe M."/>
            <person name="Komatsu T."/>
            <person name="Mizushima-Sugano J."/>
            <person name="Satoh T."/>
            <person name="Shirai Y."/>
            <person name="Takahashi Y."/>
            <person name="Nakagawa K."/>
            <person name="Okumura K."/>
            <person name="Nagase T."/>
            <person name="Nomura N."/>
            <person name="Kikuchi H."/>
            <person name="Masuho Y."/>
            <person name="Yamashita R."/>
            <person name="Nakai K."/>
            <person name="Yada T."/>
            <person name="Nakamura Y."/>
            <person name="Ohara O."/>
            <person name="Isogai T."/>
            <person name="Sugano S."/>
        </authorList>
    </citation>
    <scope>NUCLEOTIDE SEQUENCE [LARGE SCALE MRNA] (ISOFORM 2)</scope>
    <source>
        <tissue>Brain</tissue>
    </source>
</reference>
<reference key="4">
    <citation type="journal article" date="2003" name="Nature">
        <title>The DNA sequence of human chromosome 7.</title>
        <authorList>
            <person name="Hillier L.W."/>
            <person name="Fulton R.S."/>
            <person name="Fulton L.A."/>
            <person name="Graves T.A."/>
            <person name="Pepin K.H."/>
            <person name="Wagner-McPherson C."/>
            <person name="Layman D."/>
            <person name="Maas J."/>
            <person name="Jaeger S."/>
            <person name="Walker R."/>
            <person name="Wylie K."/>
            <person name="Sekhon M."/>
            <person name="Becker M.C."/>
            <person name="O'Laughlin M.D."/>
            <person name="Schaller M.E."/>
            <person name="Fewell G.A."/>
            <person name="Delehaunty K.D."/>
            <person name="Miner T.L."/>
            <person name="Nash W.E."/>
            <person name="Cordes M."/>
            <person name="Du H."/>
            <person name="Sun H."/>
            <person name="Edwards J."/>
            <person name="Bradshaw-Cordum H."/>
            <person name="Ali J."/>
            <person name="Andrews S."/>
            <person name="Isak A."/>
            <person name="Vanbrunt A."/>
            <person name="Nguyen C."/>
            <person name="Du F."/>
            <person name="Lamar B."/>
            <person name="Courtney L."/>
            <person name="Kalicki J."/>
            <person name="Ozersky P."/>
            <person name="Bielicki L."/>
            <person name="Scott K."/>
            <person name="Holmes A."/>
            <person name="Harkins R."/>
            <person name="Harris A."/>
            <person name="Strong C.M."/>
            <person name="Hou S."/>
            <person name="Tomlinson C."/>
            <person name="Dauphin-Kohlberg S."/>
            <person name="Kozlowicz-Reilly A."/>
            <person name="Leonard S."/>
            <person name="Rohlfing T."/>
            <person name="Rock S.M."/>
            <person name="Tin-Wollam A.-M."/>
            <person name="Abbott A."/>
            <person name="Minx P."/>
            <person name="Maupin R."/>
            <person name="Strowmatt C."/>
            <person name="Latreille P."/>
            <person name="Miller N."/>
            <person name="Johnson D."/>
            <person name="Murray J."/>
            <person name="Woessner J.P."/>
            <person name="Wendl M.C."/>
            <person name="Yang S.-P."/>
            <person name="Schultz B.R."/>
            <person name="Wallis J.W."/>
            <person name="Spieth J."/>
            <person name="Bieri T.A."/>
            <person name="Nelson J.O."/>
            <person name="Berkowicz N."/>
            <person name="Wohldmann P.E."/>
            <person name="Cook L.L."/>
            <person name="Hickenbotham M.T."/>
            <person name="Eldred J."/>
            <person name="Williams D."/>
            <person name="Bedell J.A."/>
            <person name="Mardis E.R."/>
            <person name="Clifton S.W."/>
            <person name="Chissoe S.L."/>
            <person name="Marra M.A."/>
            <person name="Raymond C."/>
            <person name="Haugen E."/>
            <person name="Gillett W."/>
            <person name="Zhou Y."/>
            <person name="James R."/>
            <person name="Phelps K."/>
            <person name="Iadanoto S."/>
            <person name="Bubb K."/>
            <person name="Simms E."/>
            <person name="Levy R."/>
            <person name="Clendenning J."/>
            <person name="Kaul R."/>
            <person name="Kent W.J."/>
            <person name="Furey T.S."/>
            <person name="Baertsch R.A."/>
            <person name="Brent M.R."/>
            <person name="Keibler E."/>
            <person name="Flicek P."/>
            <person name="Bork P."/>
            <person name="Suyama M."/>
            <person name="Bailey J.A."/>
            <person name="Portnoy M.E."/>
            <person name="Torrents D."/>
            <person name="Chinwalla A.T."/>
            <person name="Gish W.R."/>
            <person name="Eddy S.R."/>
            <person name="McPherson J.D."/>
            <person name="Olson M.V."/>
            <person name="Eichler E.E."/>
            <person name="Green E.D."/>
            <person name="Waterston R.H."/>
            <person name="Wilson R.K."/>
        </authorList>
    </citation>
    <scope>NUCLEOTIDE SEQUENCE [LARGE SCALE GENOMIC DNA]</scope>
</reference>
<reference key="5">
    <citation type="journal article" date="2004" name="Genome Res.">
        <title>The status, quality, and expansion of the NIH full-length cDNA project: the Mammalian Gene Collection (MGC).</title>
        <authorList>
            <consortium name="The MGC Project Team"/>
        </authorList>
    </citation>
    <scope>NUCLEOTIDE SEQUENCE [LARGE SCALE MRNA] (ISOFORM 1)</scope>
</reference>
<reference key="6">
    <citation type="journal article" date="2004" name="J. Biol. Chem.">
        <title>NEDL1, a novel ubiquitin-protein isopeptide ligase for dishevelled-1, targets mutant superoxide dismutase-1.</title>
        <authorList>
            <person name="Miyazaki K."/>
            <person name="Fujita T."/>
            <person name="Ozaki T."/>
            <person name="Kato C."/>
            <person name="Kurose Y."/>
            <person name="Sakamoto M."/>
            <person name="Kato S."/>
            <person name="Goto T."/>
            <person name="Itoyama Y."/>
            <person name="Aoki M."/>
            <person name="Nakagawara A."/>
        </authorList>
    </citation>
    <scope>NUCLEOTIDE SEQUENCE [MRNA] OF 22-1606 (ISOFORM 1)</scope>
    <scope>FUNCTION</scope>
    <scope>INTERACTION WITH DVL1; SSR3 AND SOD1</scope>
    <scope>SUBCELLULAR LOCATION</scope>
    <scope>TISSUE SPECIFICITY</scope>
</reference>
<reference key="7">
    <citation type="journal article" date="2011" name="Sci. Signal.">
        <title>System-wide temporal characterization of the proteome and phosphoproteome of human embryonic stem cell differentiation.</title>
        <authorList>
            <person name="Rigbolt K.T."/>
            <person name="Prokhorova T.A."/>
            <person name="Akimov V."/>
            <person name="Henningsen J."/>
            <person name="Johansen P.T."/>
            <person name="Kratchmarova I."/>
            <person name="Kassem M."/>
            <person name="Mann M."/>
            <person name="Olsen J.V."/>
            <person name="Blagoev B."/>
        </authorList>
    </citation>
    <scope>IDENTIFICATION BY MASS SPECTROMETRY [LARGE SCALE ANALYSIS]</scope>
</reference>
<keyword id="KW-0002">3D-structure</keyword>
<keyword id="KW-0025">Alternative splicing</keyword>
<keyword id="KW-0175">Coiled coil</keyword>
<keyword id="KW-0963">Cytoplasm</keyword>
<keyword id="KW-0597">Phosphoprotein</keyword>
<keyword id="KW-1267">Proteomics identification</keyword>
<keyword id="KW-1185">Reference proteome</keyword>
<keyword id="KW-0677">Repeat</keyword>
<keyword id="KW-0808">Transferase</keyword>
<keyword id="KW-0833">Ubl conjugation pathway</keyword>
<name>HECW1_HUMAN</name>
<dbReference type="EC" id="2.3.2.26"/>
<dbReference type="EMBL" id="AB002320">
    <property type="protein sequence ID" value="BAA20780.2"/>
    <property type="status" value="ALT_INIT"/>
    <property type="molecule type" value="mRNA"/>
</dbReference>
<dbReference type="EMBL" id="AK294918">
    <property type="protein sequence ID" value="BAG58003.1"/>
    <property type="molecule type" value="mRNA"/>
</dbReference>
<dbReference type="EMBL" id="AC004455">
    <property type="status" value="NOT_ANNOTATED_CDS"/>
    <property type="molecule type" value="Genomic_DNA"/>
</dbReference>
<dbReference type="EMBL" id="AC004692">
    <property type="status" value="NOT_ANNOTATED_CDS"/>
    <property type="molecule type" value="Genomic_DNA"/>
</dbReference>
<dbReference type="EMBL" id="AC005537">
    <property type="status" value="NOT_ANNOTATED_CDS"/>
    <property type="molecule type" value="Genomic_DNA"/>
</dbReference>
<dbReference type="EMBL" id="AC006365">
    <property type="status" value="NOT_ANNOTATED_CDS"/>
    <property type="molecule type" value="Genomic_DNA"/>
</dbReference>
<dbReference type="EMBL" id="AC011738">
    <property type="status" value="NOT_ANNOTATED_CDS"/>
    <property type="molecule type" value="Genomic_DNA"/>
</dbReference>
<dbReference type="EMBL" id="BC151227">
    <property type="protein sequence ID" value="AAI51228.1"/>
    <property type="molecule type" value="mRNA"/>
</dbReference>
<dbReference type="EMBL" id="AB048365">
    <property type="protein sequence ID" value="BAB13352.1"/>
    <property type="molecule type" value="mRNA"/>
</dbReference>
<dbReference type="CCDS" id="CCDS5469.2">
    <molecule id="Q76N89-1"/>
</dbReference>
<dbReference type="CCDS" id="CCDS69286.1">
    <molecule id="Q76N89-2"/>
</dbReference>
<dbReference type="RefSeq" id="NP_001273988.1">
    <molecule id="Q76N89-2"/>
    <property type="nucleotide sequence ID" value="NM_001287059.2"/>
</dbReference>
<dbReference type="RefSeq" id="NP_055867.3">
    <molecule id="Q76N89-1"/>
    <property type="nucleotide sequence ID" value="NM_015052.5"/>
</dbReference>
<dbReference type="RefSeq" id="XP_016867375.1">
    <property type="nucleotide sequence ID" value="XM_017011886.1"/>
</dbReference>
<dbReference type="RefSeq" id="XP_016867378.1">
    <property type="nucleotide sequence ID" value="XM_017011889.1"/>
</dbReference>
<dbReference type="RefSeq" id="XP_047276021.1">
    <molecule id="Q76N89-1"/>
    <property type="nucleotide sequence ID" value="XM_047420065.1"/>
</dbReference>
<dbReference type="PDB" id="3L4H">
    <property type="method" value="X-ray"/>
    <property type="resolution" value="1.80 A"/>
    <property type="chains" value="A=948-1056"/>
</dbReference>
<dbReference type="PDBsum" id="3L4H"/>
<dbReference type="SMR" id="Q76N89"/>
<dbReference type="BioGRID" id="116705">
    <property type="interactions" value="41"/>
</dbReference>
<dbReference type="FunCoup" id="Q76N89">
    <property type="interactions" value="1363"/>
</dbReference>
<dbReference type="IntAct" id="Q76N89">
    <property type="interactions" value="16"/>
</dbReference>
<dbReference type="MINT" id="Q76N89"/>
<dbReference type="STRING" id="9606.ENSP00000379228"/>
<dbReference type="GlyCosmos" id="Q76N89">
    <property type="glycosylation" value="1 site, 1 glycan"/>
</dbReference>
<dbReference type="GlyGen" id="Q76N89">
    <property type="glycosylation" value="2 sites, 1 O-linked glycan (1 site)"/>
</dbReference>
<dbReference type="iPTMnet" id="Q76N89"/>
<dbReference type="PhosphoSitePlus" id="Q76N89"/>
<dbReference type="BioMuta" id="HECW1"/>
<dbReference type="DMDM" id="223590222"/>
<dbReference type="jPOST" id="Q76N89"/>
<dbReference type="MassIVE" id="Q76N89"/>
<dbReference type="PaxDb" id="9606-ENSP00000379228"/>
<dbReference type="PeptideAtlas" id="Q76N89"/>
<dbReference type="ProteomicsDB" id="4192"/>
<dbReference type="ProteomicsDB" id="68692">
    <molecule id="Q76N89-1"/>
</dbReference>
<dbReference type="Antibodypedia" id="1996">
    <property type="antibodies" value="48 antibodies from 15 providers"/>
</dbReference>
<dbReference type="DNASU" id="23072"/>
<dbReference type="Ensembl" id="ENST00000395891.7">
    <molecule id="Q76N89-1"/>
    <property type="protein sequence ID" value="ENSP00000379228.1"/>
    <property type="gene ID" value="ENSG00000002746.15"/>
</dbReference>
<dbReference type="Ensembl" id="ENST00000453890.5">
    <molecule id="Q76N89-2"/>
    <property type="protein sequence ID" value="ENSP00000407774.1"/>
    <property type="gene ID" value="ENSG00000002746.15"/>
</dbReference>
<dbReference type="GeneID" id="23072"/>
<dbReference type="KEGG" id="hsa:23072"/>
<dbReference type="MANE-Select" id="ENST00000395891.7">
    <property type="protein sequence ID" value="ENSP00000379228.1"/>
    <property type="RefSeq nucleotide sequence ID" value="NM_015052.5"/>
    <property type="RefSeq protein sequence ID" value="NP_055867.3"/>
</dbReference>
<dbReference type="UCSC" id="uc003tid.2">
    <molecule id="Q76N89-1"/>
    <property type="organism name" value="human"/>
</dbReference>
<dbReference type="AGR" id="HGNC:22195"/>
<dbReference type="CTD" id="23072"/>
<dbReference type="DisGeNET" id="23072"/>
<dbReference type="GeneCards" id="HECW1"/>
<dbReference type="HGNC" id="HGNC:22195">
    <property type="gene designation" value="HECW1"/>
</dbReference>
<dbReference type="HPA" id="ENSG00000002746">
    <property type="expression patterns" value="Tissue enhanced (brain, kidney)"/>
</dbReference>
<dbReference type="MIM" id="610384">
    <property type="type" value="gene"/>
</dbReference>
<dbReference type="neXtProt" id="NX_Q76N89"/>
<dbReference type="OpenTargets" id="ENSG00000002746"/>
<dbReference type="PharmGKB" id="PA134964191"/>
<dbReference type="VEuPathDB" id="HostDB:ENSG00000002746"/>
<dbReference type="eggNOG" id="KOG0940">
    <property type="taxonomic scope" value="Eukaryota"/>
</dbReference>
<dbReference type="GeneTree" id="ENSGT00940000158294"/>
<dbReference type="HOGENOM" id="CLU_002173_14_0_1"/>
<dbReference type="InParanoid" id="Q76N89"/>
<dbReference type="OMA" id="SGSQNCE"/>
<dbReference type="OrthoDB" id="5987976at2759"/>
<dbReference type="PAN-GO" id="Q76N89">
    <property type="GO annotations" value="6 GO annotations based on evolutionary models"/>
</dbReference>
<dbReference type="PhylomeDB" id="Q76N89"/>
<dbReference type="TreeFam" id="TF313938"/>
<dbReference type="BRENDA" id="2.3.2.26">
    <property type="organism ID" value="2681"/>
</dbReference>
<dbReference type="PathwayCommons" id="Q76N89"/>
<dbReference type="Reactome" id="R-HSA-4641258">
    <property type="pathway name" value="Degradation of DVL"/>
</dbReference>
<dbReference type="SignaLink" id="Q76N89"/>
<dbReference type="SIGNOR" id="Q76N89"/>
<dbReference type="UniPathway" id="UPA00143"/>
<dbReference type="BioGRID-ORCS" id="23072">
    <property type="hits" value="11 hits in 1185 CRISPR screens"/>
</dbReference>
<dbReference type="CD-CODE" id="FB4E32DD">
    <property type="entry name" value="Presynaptic clusters and postsynaptic densities"/>
</dbReference>
<dbReference type="ChiTaRS" id="HECW1">
    <property type="organism name" value="human"/>
</dbReference>
<dbReference type="EvolutionaryTrace" id="Q76N89"/>
<dbReference type="GenomeRNAi" id="23072"/>
<dbReference type="Pharos" id="Q76N89">
    <property type="development level" value="Tbio"/>
</dbReference>
<dbReference type="PRO" id="PR:Q76N89"/>
<dbReference type="Proteomes" id="UP000005640">
    <property type="component" value="Chromosome 7"/>
</dbReference>
<dbReference type="RNAct" id="Q76N89">
    <property type="molecule type" value="protein"/>
</dbReference>
<dbReference type="Bgee" id="ENSG00000002746">
    <property type="expression patterns" value="Expressed in Brodmann (1909) area 23 and 126 other cell types or tissues"/>
</dbReference>
<dbReference type="ExpressionAtlas" id="Q76N89">
    <property type="expression patterns" value="baseline and differential"/>
</dbReference>
<dbReference type="GO" id="GO:0005737">
    <property type="term" value="C:cytoplasm"/>
    <property type="evidence" value="ECO:0000318"/>
    <property type="project" value="GO_Central"/>
</dbReference>
<dbReference type="GO" id="GO:0005829">
    <property type="term" value="C:cytosol"/>
    <property type="evidence" value="ECO:0000304"/>
    <property type="project" value="Reactome"/>
</dbReference>
<dbReference type="GO" id="GO:0061630">
    <property type="term" value="F:ubiquitin protein ligase activity"/>
    <property type="evidence" value="ECO:0000318"/>
    <property type="project" value="GO_Central"/>
</dbReference>
<dbReference type="GO" id="GO:0090090">
    <property type="term" value="P:negative regulation of canonical Wnt signaling pathway"/>
    <property type="evidence" value="ECO:0000304"/>
    <property type="project" value="Reactome"/>
</dbReference>
<dbReference type="GO" id="GO:0016567">
    <property type="term" value="P:protein ubiquitination"/>
    <property type="evidence" value="ECO:0007669"/>
    <property type="project" value="UniProtKB-UniPathway"/>
</dbReference>
<dbReference type="GO" id="GO:0048814">
    <property type="term" value="P:regulation of dendrite morphogenesis"/>
    <property type="evidence" value="ECO:0000318"/>
    <property type="project" value="GO_Central"/>
</dbReference>
<dbReference type="GO" id="GO:0006511">
    <property type="term" value="P:ubiquitin-dependent protein catabolic process"/>
    <property type="evidence" value="ECO:0000318"/>
    <property type="project" value="GO_Central"/>
</dbReference>
<dbReference type="CDD" id="cd08691">
    <property type="entry name" value="C2_NEDL1-like"/>
    <property type="match status" value="1"/>
</dbReference>
<dbReference type="CDD" id="cd00078">
    <property type="entry name" value="HECTc"/>
    <property type="match status" value="1"/>
</dbReference>
<dbReference type="CDD" id="cd00201">
    <property type="entry name" value="WW"/>
    <property type="match status" value="2"/>
</dbReference>
<dbReference type="FunFam" id="3.30.2410.10:FF:000002">
    <property type="entry name" value="E3 ubiquitin-protein ligase HECW2"/>
    <property type="match status" value="1"/>
</dbReference>
<dbReference type="FunFam" id="3.90.1750.10:FF:000036">
    <property type="entry name" value="E3 ubiquitin-protein ligase HECW2"/>
    <property type="match status" value="1"/>
</dbReference>
<dbReference type="FunFam" id="2.20.70.10:FF:000007">
    <property type="entry name" value="E3 ubiquitin-protein ligase HECW2 isoform X1"/>
    <property type="match status" value="1"/>
</dbReference>
<dbReference type="FunFam" id="2.60.40.2840:FF:000001">
    <property type="entry name" value="E3 ubiquitin-protein ligase HECW2 isoform X1"/>
    <property type="match status" value="1"/>
</dbReference>
<dbReference type="FunFam" id="3.30.2160.10:FF:000005">
    <property type="entry name" value="E3 ubiquitin-protein ligase HECW2 isoform X1"/>
    <property type="match status" value="1"/>
</dbReference>
<dbReference type="FunFam" id="3.90.1750.10:FF:000004">
    <property type="entry name" value="E3 ubiquitin-protein ligase HECW2 isoform X1"/>
    <property type="match status" value="1"/>
</dbReference>
<dbReference type="FunFam" id="2.20.70.10:FF:000048">
    <property type="entry name" value="HECT, C2 and WW domain-containing E3 ubiquitin protein ligase 1"/>
    <property type="match status" value="1"/>
</dbReference>
<dbReference type="FunFam" id="2.60.40.150:FF:000035">
    <property type="entry name" value="LOW QUALITY PROTEIN: E3 ubiquitin-protein ligase HECW2"/>
    <property type="match status" value="1"/>
</dbReference>
<dbReference type="Gene3D" id="2.20.70.10">
    <property type="match status" value="2"/>
</dbReference>
<dbReference type="Gene3D" id="2.60.40.2840">
    <property type="match status" value="1"/>
</dbReference>
<dbReference type="Gene3D" id="2.60.40.150">
    <property type="entry name" value="C2 domain"/>
    <property type="match status" value="1"/>
</dbReference>
<dbReference type="Gene3D" id="3.30.2160.10">
    <property type="entry name" value="Hect, E3 ligase catalytic domain"/>
    <property type="match status" value="1"/>
</dbReference>
<dbReference type="Gene3D" id="3.30.2410.10">
    <property type="entry name" value="Hect, E3 ligase catalytic domain"/>
    <property type="match status" value="1"/>
</dbReference>
<dbReference type="Gene3D" id="3.90.1750.10">
    <property type="entry name" value="Hect, E3 ligase catalytic domains"/>
    <property type="match status" value="1"/>
</dbReference>
<dbReference type="InterPro" id="IPR000008">
    <property type="entry name" value="C2_dom"/>
</dbReference>
<dbReference type="InterPro" id="IPR035892">
    <property type="entry name" value="C2_domain_sf"/>
</dbReference>
<dbReference type="InterPro" id="IPR037795">
    <property type="entry name" value="C2_HECW"/>
</dbReference>
<dbReference type="InterPro" id="IPR050409">
    <property type="entry name" value="E3_ubiq-protein_ligase"/>
</dbReference>
<dbReference type="InterPro" id="IPR000569">
    <property type="entry name" value="HECT_dom"/>
</dbReference>
<dbReference type="InterPro" id="IPR035983">
    <property type="entry name" value="Hect_E3_ubiquitin_ligase"/>
</dbReference>
<dbReference type="InterPro" id="IPR040524">
    <property type="entry name" value="HECW1_helix"/>
</dbReference>
<dbReference type="InterPro" id="IPR032348">
    <property type="entry name" value="HECW_N"/>
</dbReference>
<dbReference type="InterPro" id="IPR001202">
    <property type="entry name" value="WW_dom"/>
</dbReference>
<dbReference type="InterPro" id="IPR036020">
    <property type="entry name" value="WW_dom_sf"/>
</dbReference>
<dbReference type="PANTHER" id="PTHR11254:SF79">
    <property type="entry name" value="E3 UBIQUITIN-PROTEIN LIGASE HECW1"/>
    <property type="match status" value="1"/>
</dbReference>
<dbReference type="PANTHER" id="PTHR11254">
    <property type="entry name" value="HECT DOMAIN UBIQUITIN-PROTEIN LIGASE"/>
    <property type="match status" value="1"/>
</dbReference>
<dbReference type="Pfam" id="PF00168">
    <property type="entry name" value="C2"/>
    <property type="match status" value="1"/>
</dbReference>
<dbReference type="Pfam" id="PF00632">
    <property type="entry name" value="HECT"/>
    <property type="match status" value="1"/>
</dbReference>
<dbReference type="Pfam" id="PF18436">
    <property type="entry name" value="HECW1_helix"/>
    <property type="match status" value="1"/>
</dbReference>
<dbReference type="Pfam" id="PF16562">
    <property type="entry name" value="HECW_N"/>
    <property type="match status" value="1"/>
</dbReference>
<dbReference type="Pfam" id="PF00397">
    <property type="entry name" value="WW"/>
    <property type="match status" value="1"/>
</dbReference>
<dbReference type="SMART" id="SM00239">
    <property type="entry name" value="C2"/>
    <property type="match status" value="1"/>
</dbReference>
<dbReference type="SMART" id="SM00119">
    <property type="entry name" value="HECTc"/>
    <property type="match status" value="1"/>
</dbReference>
<dbReference type="SMART" id="SM00456">
    <property type="entry name" value="WW"/>
    <property type="match status" value="2"/>
</dbReference>
<dbReference type="SUPFAM" id="SSF49562">
    <property type="entry name" value="C2 domain (Calcium/lipid-binding domain, CaLB)"/>
    <property type="match status" value="1"/>
</dbReference>
<dbReference type="SUPFAM" id="SSF56204">
    <property type="entry name" value="Hect, E3 ligase catalytic domain"/>
    <property type="match status" value="1"/>
</dbReference>
<dbReference type="SUPFAM" id="SSF51045">
    <property type="entry name" value="WW domain"/>
    <property type="match status" value="2"/>
</dbReference>
<dbReference type="PROSITE" id="PS50004">
    <property type="entry name" value="C2"/>
    <property type="match status" value="1"/>
</dbReference>
<dbReference type="PROSITE" id="PS50237">
    <property type="entry name" value="HECT"/>
    <property type="match status" value="1"/>
</dbReference>
<dbReference type="PROSITE" id="PS01159">
    <property type="entry name" value="WW_DOMAIN_1"/>
    <property type="match status" value="2"/>
</dbReference>
<dbReference type="PROSITE" id="PS50020">
    <property type="entry name" value="WW_DOMAIN_2"/>
    <property type="match status" value="2"/>
</dbReference>
<feature type="chain" id="PRO_0000277665" description="E3 ubiquitin-protein ligase HECW1">
    <location>
        <begin position="1"/>
        <end position="1606"/>
    </location>
</feature>
<feature type="domain" description="C2" evidence="3">
    <location>
        <begin position="182"/>
        <end position="318"/>
    </location>
</feature>
<feature type="domain" description="WW 1" evidence="5">
    <location>
        <begin position="829"/>
        <end position="862"/>
    </location>
</feature>
<feature type="domain" description="WW 2" evidence="5">
    <location>
        <begin position="1018"/>
        <end position="1051"/>
    </location>
</feature>
<feature type="domain" description="HECT" evidence="4">
    <location>
        <begin position="1271"/>
        <end position="1606"/>
    </location>
</feature>
<feature type="region of interest" description="Disordered" evidence="6">
    <location>
        <begin position="349"/>
        <end position="418"/>
    </location>
</feature>
<feature type="region of interest" description="Disordered" evidence="6">
    <location>
        <begin position="459"/>
        <end position="538"/>
    </location>
</feature>
<feature type="region of interest" description="Disordered" evidence="6">
    <location>
        <begin position="566"/>
        <end position="672"/>
    </location>
</feature>
<feature type="region of interest" description="Disordered" evidence="6">
    <location>
        <begin position="730"/>
        <end position="815"/>
    </location>
</feature>
<feature type="region of interest" description="Disordered" evidence="6">
    <location>
        <begin position="894"/>
        <end position="938"/>
    </location>
</feature>
<feature type="coiled-coil region" evidence="2">
    <location>
        <begin position="870"/>
        <end position="901"/>
    </location>
</feature>
<feature type="compositionally biased region" description="Polar residues" evidence="6">
    <location>
        <begin position="354"/>
        <end position="373"/>
    </location>
</feature>
<feature type="compositionally biased region" description="Basic and acidic residues" evidence="6">
    <location>
        <begin position="380"/>
        <end position="392"/>
    </location>
</feature>
<feature type="compositionally biased region" description="Acidic residues" evidence="6">
    <location>
        <begin position="500"/>
        <end position="511"/>
    </location>
</feature>
<feature type="compositionally biased region" description="Acidic residues" evidence="6">
    <location>
        <begin position="579"/>
        <end position="588"/>
    </location>
</feature>
<feature type="compositionally biased region" description="Basic and acidic residues" evidence="6">
    <location>
        <begin position="589"/>
        <end position="600"/>
    </location>
</feature>
<feature type="compositionally biased region" description="Acidic residues" evidence="6">
    <location>
        <begin position="612"/>
        <end position="621"/>
    </location>
</feature>
<feature type="compositionally biased region" description="Polar residues" evidence="6">
    <location>
        <begin position="651"/>
        <end position="663"/>
    </location>
</feature>
<feature type="compositionally biased region" description="Polar residues" evidence="6">
    <location>
        <begin position="751"/>
        <end position="765"/>
    </location>
</feature>
<feature type="compositionally biased region" description="Polar residues" evidence="6">
    <location>
        <begin position="806"/>
        <end position="815"/>
    </location>
</feature>
<feature type="active site" description="Glycyl thioester intermediate" evidence="4">
    <location>
        <position position="1574"/>
    </location>
</feature>
<feature type="modified residue" description="Phosphoserine" evidence="1">
    <location>
        <position position="874"/>
    </location>
</feature>
<feature type="modified residue" description="Phosphoserine" evidence="1">
    <location>
        <position position="937"/>
    </location>
</feature>
<feature type="modified residue" description="Phosphoserine" evidence="1">
    <location>
        <position position="939"/>
    </location>
</feature>
<feature type="splice variant" id="VSP_054642" description="In isoform 2." evidence="8">
    <original>GECPILHNSQPVSQLPSLRPEHHHYPTIDEPLPPN</original>
    <variation>D</variation>
    <location>
        <begin position="800"/>
        <end position="834"/>
    </location>
</feature>
<feature type="sequence conflict" description="In Ref. 1; BAA20780, 4; AAI51228 and 5; BAB13352." evidence="9" ref="1 4 5">
    <original>G</original>
    <variation>R</variation>
    <location>
        <position position="404"/>
    </location>
</feature>
<feature type="helix" evidence="10">
    <location>
        <begin position="953"/>
        <end position="958"/>
    </location>
</feature>
<feature type="helix" evidence="10">
    <location>
        <begin position="963"/>
        <end position="968"/>
    </location>
</feature>
<feature type="helix" evidence="10">
    <location>
        <begin position="971"/>
        <end position="979"/>
    </location>
</feature>
<feature type="helix" evidence="10">
    <location>
        <begin position="982"/>
        <end position="992"/>
    </location>
</feature>
<feature type="helix" evidence="10">
    <location>
        <begin position="995"/>
        <end position="1000"/>
    </location>
</feature>
<feature type="helix" evidence="10">
    <location>
        <begin position="1004"/>
        <end position="1011"/>
    </location>
</feature>
<feature type="strand" evidence="10">
    <location>
        <begin position="1024"/>
        <end position="1028"/>
    </location>
</feature>
<feature type="strand" evidence="10">
    <location>
        <begin position="1034"/>
        <end position="1038"/>
    </location>
</feature>
<feature type="turn" evidence="10">
    <location>
        <begin position="1039"/>
        <end position="1042"/>
    </location>
</feature>
<feature type="strand" evidence="10">
    <location>
        <begin position="1043"/>
        <end position="1047"/>
    </location>
</feature>
<sequence>MLLHLCSVKNLYQNRFLGLAAMASPSRNSQSRRRCKEPLRYSYNPDQFHNMDLRGGPHDGVTIPRSTSDTDLVTSDSRSTLMVSSSYYSIGHSQDLVIHWDIKEEVDAGDWIGMYLIDEVLSENFLDYKNRGVNGSHRGQIIWKIDASSYFVEPETKICFKYYHGVSGALRATTPSVTVKNSAAPIFKSIGADETVQGQGSRRLISFSLSDFQAMGLKKGMFFNPDPYLKISIQPGKHSIFPALPHHGQERRSKIIGNTVNPIWQAEQFSFVSLPTDVLEIEVKDKFAKSRPIIKRFLGKLSMPVQRLLERHAIGDRVVSYTLGRRLPTDHVSGQLQFRFEITSSIHPDDEEISLSTEPESAQIQDSPMNNLMESGSGEPRSEAPESSESWKPEQLGEGSVPDGPGNQSIELSRPAEEAAVITEAGDQGMVSVGPEGAGELLAQVQKDIQPAPSAEELAEQLDLGEEASALLLEDGEAPASTKEEPLEEEATTQSRAGREEEEKEQEEEGDVSTLEQGEGRLQLRASVKRKSRPCSLPVSELETVIASACGDPETPRTHYIRIHTLLHSMPSAQGGSAAEEEDGAEEESTLKDSSEKDGLSEVDTVAADPSALEEDREEPEGATPGTAHPGHSGGHFPSLANGAAQDGDTHPSTGSESDSSPRQGGDHSCEGCDASCCSPSCYSSSCYSTSCYSSSCYSASCYSPSCYNGNRFASHTRFSSVDSAKISESTVFSSQDDEEEENSAFESVPDSMQSPELDPESTNGAGPWQDELAAPSGHVERSPEGLESPVAGPSNRREGECPILHNSQPVSQLPSLRPEHHHYPTIDEPLPPNWEARIDSHGRVFYVDHVNRTTTWQRPTAAATPDGMRRSGSIQQMEQLNRRYQNIQRTIATERSEEDSGSQSCEQAPAGGGGGGGSDSEAESSQSSLDLRREGSLSPVNSQKITLLLQSPAVKFITNPEFFTVLHANYSAYRVFTSSTCLKHMILKVRRDARNFERYQHNRDLVNFINMFADTRLELPRGWEIKTDQQGKSFFVDHNSRATTFIDPRIPLQNGRLPNHLTHRQHLQRLRSYSAGEASEVSRNRGASLLARPGHSLVAAIRSQHQHESLPLAYNDKIVAFLRQPNIFEMLQERQPSLARNHTLREKIHYIRTEGNHGLEKLSCDADLVILLSLFEEEIMSYVPLQAAFHPGYSFSPRCSPCSSPQNSPGLQRASARAPSPYRRDFEAKLRNFYRKLEAKGFGQGPGKIKLIIRRDHLLEGTFNQVMAYSRKELQRNKLYVTFVGEEGLDYSGPSREFFFLLSQELFNPYYGLFEYSANDTYTVQISPMSAFVENHLEWFRFSGRILGLALIHQYLLDAFFTRPFYKALLRLPCDLSDLEYLDEEFHQSLQWMKDNNITDILDLTFTVNEEVFGQVTERELKSGGANTQVTEKNKKEYIERMVKWRVERGVVQQTEALVRGFYEVVDSRLVSVFDARELELVIAGTAEIDLNDWRNNTEYRGGYHDGHLVIRWFWAAVERFNNEQRLRLLQFVTGTSSVPYEGFAALRGSNGLRRFCIEKWGKITSLPRAHTCFNRLDLPPYPSYSMLYEKLLTAVEETSTFGLE</sequence>
<gene>
    <name type="primary">HECW1</name>
    <name type="synonym">KIAA0322</name>
    <name type="synonym">NEDL1</name>
</gene>
<organism>
    <name type="scientific">Homo sapiens</name>
    <name type="common">Human</name>
    <dbReference type="NCBI Taxonomy" id="9606"/>
    <lineage>
        <taxon>Eukaryota</taxon>
        <taxon>Metazoa</taxon>
        <taxon>Chordata</taxon>
        <taxon>Craniata</taxon>
        <taxon>Vertebrata</taxon>
        <taxon>Euteleostomi</taxon>
        <taxon>Mammalia</taxon>
        <taxon>Eutheria</taxon>
        <taxon>Euarchontoglires</taxon>
        <taxon>Primates</taxon>
        <taxon>Haplorrhini</taxon>
        <taxon>Catarrhini</taxon>
        <taxon>Hominidae</taxon>
        <taxon>Homo</taxon>
    </lineage>
</organism>